<sequence length="67" mass="7469">MAVPKRKMSRSNTRARRSQWKATAPHLVKTVENGQVTYSLPHQAKVVTDSAGTALFLEYKGRKVADV</sequence>
<evidence type="ECO:0000255" key="1">
    <source>
        <dbReference type="HAMAP-Rule" id="MF_00340"/>
    </source>
</evidence>
<evidence type="ECO:0000256" key="2">
    <source>
        <dbReference type="SAM" id="MobiDB-lite"/>
    </source>
</evidence>
<evidence type="ECO:0000305" key="3"/>
<name>RL32_ARTS2</name>
<organism>
    <name type="scientific">Arthrobacter sp. (strain FB24)</name>
    <dbReference type="NCBI Taxonomy" id="290399"/>
    <lineage>
        <taxon>Bacteria</taxon>
        <taxon>Bacillati</taxon>
        <taxon>Actinomycetota</taxon>
        <taxon>Actinomycetes</taxon>
        <taxon>Micrococcales</taxon>
        <taxon>Micrococcaceae</taxon>
        <taxon>Arthrobacter</taxon>
    </lineage>
</organism>
<protein>
    <recommendedName>
        <fullName evidence="1">Large ribosomal subunit protein bL32</fullName>
    </recommendedName>
    <alternativeName>
        <fullName evidence="3">50S ribosomal protein L32</fullName>
    </alternativeName>
</protein>
<comment type="similarity">
    <text evidence="1">Belongs to the bacterial ribosomal protein bL32 family.</text>
</comment>
<gene>
    <name evidence="1" type="primary">rpmF</name>
    <name type="ordered locus">Arth_2502</name>
</gene>
<dbReference type="EMBL" id="CP000454">
    <property type="protein sequence ID" value="ABK03881.1"/>
    <property type="molecule type" value="Genomic_DNA"/>
</dbReference>
<dbReference type="RefSeq" id="WP_009356569.1">
    <property type="nucleotide sequence ID" value="NC_008541.1"/>
</dbReference>
<dbReference type="SMR" id="A0JXW1"/>
<dbReference type="STRING" id="290399.Arth_2502"/>
<dbReference type="GeneID" id="97423990"/>
<dbReference type="KEGG" id="art:Arth_2502"/>
<dbReference type="eggNOG" id="COG0333">
    <property type="taxonomic scope" value="Bacteria"/>
</dbReference>
<dbReference type="HOGENOM" id="CLU_2805252_0_0_11"/>
<dbReference type="OrthoDB" id="9807363at2"/>
<dbReference type="Proteomes" id="UP000000754">
    <property type="component" value="Chromosome"/>
</dbReference>
<dbReference type="GO" id="GO:0015934">
    <property type="term" value="C:large ribosomal subunit"/>
    <property type="evidence" value="ECO:0007669"/>
    <property type="project" value="InterPro"/>
</dbReference>
<dbReference type="GO" id="GO:0003735">
    <property type="term" value="F:structural constituent of ribosome"/>
    <property type="evidence" value="ECO:0007669"/>
    <property type="project" value="InterPro"/>
</dbReference>
<dbReference type="GO" id="GO:0006412">
    <property type="term" value="P:translation"/>
    <property type="evidence" value="ECO:0007669"/>
    <property type="project" value="UniProtKB-UniRule"/>
</dbReference>
<dbReference type="HAMAP" id="MF_00340">
    <property type="entry name" value="Ribosomal_bL32"/>
    <property type="match status" value="1"/>
</dbReference>
<dbReference type="InterPro" id="IPR002677">
    <property type="entry name" value="Ribosomal_bL32"/>
</dbReference>
<dbReference type="InterPro" id="IPR011332">
    <property type="entry name" value="Ribosomal_zn-bd"/>
</dbReference>
<dbReference type="NCBIfam" id="TIGR01031">
    <property type="entry name" value="rpmF_bact"/>
    <property type="match status" value="1"/>
</dbReference>
<dbReference type="Pfam" id="PF01783">
    <property type="entry name" value="Ribosomal_L32p"/>
    <property type="match status" value="1"/>
</dbReference>
<dbReference type="SUPFAM" id="SSF57829">
    <property type="entry name" value="Zn-binding ribosomal proteins"/>
    <property type="match status" value="1"/>
</dbReference>
<feature type="chain" id="PRO_0000296422" description="Large ribosomal subunit protein bL32">
    <location>
        <begin position="1"/>
        <end position="67"/>
    </location>
</feature>
<feature type="region of interest" description="Disordered" evidence="2">
    <location>
        <begin position="1"/>
        <end position="21"/>
    </location>
</feature>
<feature type="compositionally biased region" description="Basic residues" evidence="2">
    <location>
        <begin position="1"/>
        <end position="19"/>
    </location>
</feature>
<reference key="1">
    <citation type="journal article" date="2013" name="Stand. Genomic Sci.">
        <title>Complete genome sequence of Arthrobacter sp. strain FB24.</title>
        <authorList>
            <person name="Nakatsu C.H."/>
            <person name="Barabote R."/>
            <person name="Thompson S."/>
            <person name="Bruce D."/>
            <person name="Detter C."/>
            <person name="Brettin T."/>
            <person name="Han C."/>
            <person name="Beasley F."/>
            <person name="Chen W."/>
            <person name="Konopka A."/>
            <person name="Xie G."/>
        </authorList>
    </citation>
    <scope>NUCLEOTIDE SEQUENCE [LARGE SCALE GENOMIC DNA]</scope>
    <source>
        <strain>FB24</strain>
    </source>
</reference>
<proteinExistence type="inferred from homology"/>
<accession>A0JXW1</accession>
<keyword id="KW-1185">Reference proteome</keyword>
<keyword id="KW-0687">Ribonucleoprotein</keyword>
<keyword id="KW-0689">Ribosomal protein</keyword>